<sequence>MLAGRPPPPVSSLVHDMIAQRARKQPDAEASISWDTTMTYADLDELSDTVASHLVSIGLQVGSTVVTCLDKSGWVPAIYLSILKAGGAFAPVSPGLSADQLTSAMRRLSPSIVISSTPNLSKFVGLAEHVLDISEILKTPKNTNTQLLSSLTVAVQDPACVLFTSKGEGEETLLVLDHVAVCTSIVTNSNVHDFSPATRTLQFAPYDSRASISDVLFTLAAGGCVCTVSEEEQTGRIADACTRMNPSLVCLTPSSAAVLNQDDLPGIDTIILAGEHLDKDSVGKWATVANLINAYAPTAALGYACCTAPLITISSPRNIGWPRGCAAWVMDPQDPTRLAPPGAVGQLLVESPFLGQSYESGDGGSASALVPRPECLSRPMFSLKPAGDERCFLTEHLVQFDIGDGTLQVVGHKNSKGQLLQFDSHHASSSASSVGETPGVTGPISTPMGDSVSETSLDTTAIDVNLETTDTRTTLLGLSPEKLSRLEALLQPLGQVQQCYPCCSVQEGILVSQVKSPGTYNILVVWELVNASTVSLDRLRTAWERVVKRHAPLRSTFVESLRDGSVFDQVVLTSPSVDVVELPWIEDLTEDDDMLKLTSVTWDMGRPHHRLGLSKAADGRLRCQLLISHAVIDGLSVQALGHDLERSLNDLLPNSGSMDLQSRYFQQLQQIPSEGGPRVYTKRRLLPNIKQLRQFCQEQGTTLFSLTQTAWALVLRAYTLSDDVCFAYMATDRHLLGDDADRAVGFFINLMLCRVGLDGSTPIADVLNKLRQDFVEGFPYQHHPLAEIAHEQGVPASQLFNTTITFMSDDETVEPHCDGVQLHRVADQDVAEYDVVLRVFDSYQDNVAVEFSYWSSSLSSAQAENVFGAFLAAITSIPQSTTVDDVQLMDESMKQQIQQWNSQLPMHVDTCTHDLILDAAQDYPDAPAVESHDGSLSYGEFDVMTGKLAAHLKSLDVGHGIPVVFRMEKSLWAIVAMVGIMRAGCHFVPLDPAWPVERTQFIIDNVGASILLTTESTPALPVQHINHTVVLSPELLNKLPTENSLLPHVKPSDPAYILYTSGSTGQPKGVVVEHQTLSSSSTAHGKAMLMDRQTRAFQFSSFTFDVSLGEIMTTLVHGGCVCIPSSDDRLSNISGAISKLRANQLFMTTTTLGTFSPEDCPTVKTVVCGGELLSQAIKDVWAPHVNLLHGYGPTEACIYAVSGHANDPTLPPSVIGHAMDGNRVWVCRPDDPRILSPIGALGELIIEGPIVAREYFNDSDRTNTSFLDRIPESWGTPSPYRLYRTGDLVRWNMDGSLTFFGRHDGQLKVRGQRCEAGDIENHLTTIEPDIAHCAALVPKQGACASMLVAVLSFKTTHPVLSTTTGEVQLLDTQQVSGIIAKLQESLAQQVPGYMVPQVWLPVVSLPSTTACKTDRRRVSRWVDQLDKATLDNVLNLATTHSATPLADRSPVHMMLATAWGEVLGTPVEFIPDDRSFFSLGGDSILAILVVNRCRAQGIELSVSDILRGRTINDMANNIAISEQHSTSDSSTQGHVTAAHSLALGSGYDLESPVLSQSRTAQLQLASSIDQHTLEDAVRQLIHLHPALRTTYVKEDDAWFARESTDVSKVLLFVSHDGTEAKSSALLDATEGPLLAVDYFPGHNRVAVSALHITLDLASWNLVLRDLDCILSGSPVIPHARPAMDTRASPSHTDEPSVVANLDYWELDPEETYLPHESKYELRIDADASQLLFESCSRSMLTVVDVVVAAAAESFSRSFTDRTVPVIHAADTPRTHVGYGDSVYPVQLTNDLVSSGTAVVAATAKNARLASSKEISSYMAESYTPKVLAARLPEILVRCLDNARFQGNLLQQQGDDLDTATLIPSCISITVSPNDDKSLGVVVAHSWDLGQQKKVRKWVRVLQTALLDTIRAVARANFVSPADFPLVKVSDDKAWEQLRSTINEAVGPSGPTVEDVYPCSPVQQGMLISQAKSTSSYTVDVVWKIHAPSGSPAVSIAKLENAWAKVVQRHSALRTIFVDGSAANEAFLATVLRNPSARVIHQTVVGEDAVESLLAFDPELPVASHEPPHVLTIADAQDKILVHLRINHAVVDGISLDVLQRDLHRAYVDEVGSEWSVSDHSFRDYVAYVKAQDSDKSLDFWKNRLNTVSACRFPQLQVPDVAIANEKRIFKTQIDDIAPLLKLCQTNGVSISNLAQLAWALVLRGYTNNHHVCFGYMTSGRDAPVSGIESAAGVFINLVISDLALDDAMTVKEALESSRAGLADSMDHQYCPLSKVQKALDMGGEPFFNTVLSCYREDDVTPSKTGVAVDLVHLDDTSEFAIAAKIAYTRSTMELSLTYRTEVICPEAADVIGDVWLRTLQSLPSLSDTKISDISLMDPLSSKLVKRWNEHVPGPVDACLHDIITDVARIEPDKMALYSSAGTLTYAELDEFSTRLGHHLVSMGVGPEVIVPLLFEKSIWAVVAMLGVLKAGGAFVALDPAHPAERLALIISDTGSPVMVMSANQATTPLVTGDLSNLEVAMFTVTHESILELPALSDKPCPTVTPDNAAYVIFTSGSTGRPKGVVIEHRAVSTGTKEHGSQMNYTSTSRVLQFASYAFDATIGEVFTTLVYNGTVCIATETERIEDLTGFINRANVDWAFLTPAVARMMTPSDVPTLETLICGGEPIGDLTPRIWSEIKFIQAYGPTETCVFASISDRQHREVRPAIIGHMMGSAAWVVSPSNSDLLVPVGSVGEMLIEGPILGRGYRNDPDKTDASFIRDPEWSVHYPRHSNGRRLYKTGDLVRYNLDGSMDFVQRKDTQIKIRGQRVEAGEIESHVTSAHKDVQHVYVTFVKNGRLSSRLVAIISLKGFGSTESSSSGSLQVLKGDDYDRAKELLRTVTEYLSSKLPRHMVPAVWAVVEGSSVPLTTSGKIDRRLMTNWLEKADEDLVRQILALGQEESVSDDSLTSTEVTIRSVWALVLNLDPQKINSEHRFFSLGGDSITAMQVVSHCRSQGIALTVKDIFKHQTIASLAAFVDYDSAGKIGAPATGNEFDLSDPVEESFALSPIQKMFFDIYPDGVNHFNQSFLVQIASGNKVASPTLHAALNQLVSRHSMLRARYTRSQGQWVQRVTDDVNGSLQYQEHKNTSLGQISNLIDLAQQSLDIQHGPLVSAKLIQLPSRQILALVAHHLVVDMVSWRVLLEELEAILTGKPLAPASVQPVPFQAWVRVQSTLAEELSAHNVLPYPVPEPRQDYWGIDLAKSNGWASTREISFELNEAMTKAILGPCNEPLQTDPQDLFLAAAFRSFAQAFPDRPLPAIFTEGHGRDADVDVDLSRTVGWFTCIVPVALAQDVPEDLLETTMRIKDSRRSVPGHGVPYFSYRYMSGDGVTGNEFRQHDQMEILFNYHGQYQQLERDGALLQTIPEGEFAQRDVDNSARRLAVFDISVAVVSGRARVSMLMPQSLAPTLAQQVEVWSDSFQDKLADVVYKTSTMKSEFTLNDTPLIKDMSYPNLAEMKTLCLEHTGKWGPGSIEEIFPCSPMQEGILLSQMRTPDLYDVRFAFEVSSHDSSPQVSRLHEAWEQVVKRQPMLRTVFLPNLRGSGSFDQAILRKTLATVHHIELEELAEPSSHLVKRVLETMEKAPASSFEYGKVPHELSIYTVGDRMFILLRLSHALVDGASLPYIIKDLQQAYMHKLPAAPGLGYRELVSFIQKQPMDEALEYWSGYLDGAGPCRLPLLLDDAVIPSPGKLEARDIPVPVPDAKALRSLCAKYGVTMASIFHAAWALILRAYIGDDEVHFGYLASGRDAPIQGITSLIGPLINMLISRVNFDRSKTVAQLLQDICEDFASSMSNQYASLAQVQHSLGLGSEPLFTTVVSFQRHDPTSAGADGGSDGIKLTGIDSRDPTEYDVSLNVVDSDQELSFTFTYWTSKISSAHATHMIRALLSALTSFAENVDQPIVNVNLVSPETRCELDSWNAIGMQELHTECAHTLFEQQVEKIPDQQAICAWDGNFTYRELNEASNAFAHHLYSLGEATPKPDEFVITCFDKSAWATVSQMAILKAGAAFAAVDPTYPIVRVKTIVNDLRASVLFTETKYKDRFQGIFSKVIVVDQEMLDSIGGPQLDAPSTPVNGNNLSYSIFTSGSTGQPKGILIEHQSLSTVAKHFAKPYQIDQNTRTLQFAAYTFDLSVGETFMTLLNGGCLCITSERRRLEDLTGAINDFQVNWAFLTPTMADILDPAQVPSMKSLALAGEAATSENIRKWHDKVHFVIAYGPAETTICCNATDGVKATSDPANFGPARGAGIWVADMDDPSILLPVGAVGELLVEGPIVGRGYVDPIKTAEVFIDPPTWLTTQYPRVYRSGDIVRYNPDGTCSFVRRRDNQVKVRGQRIELNEVEVHVSQADADLQHTVVLLPKTGACQGRLTTVLSRHQQQEKVEAQRVLCPVTSEEDRSRNSTLRNKLSSTLPGYMIPKIWITVEQLPLTTNGKMDRRKIQDWVHALTEQELAAIVSSTETTVTGTQDTRKLTPMEQQLVKAWSQVLNLPASSLPLDQSFTSLGGDSISAMQIVSKARECGVTVSVDKVLRSESLSELANHARFKALAPNSNGIQSLVVEKTEPFPLLPIQRMFFEMNPSGNNHFNQTFTVRLSKTLSAERIESAITTVVKHHPMLRARFLKDHNSDWTQQIVPDAESSLGFRQQSFASLSDAVPVLDELQTSLDIHNGPLVASCLINLPDAQVLSLAAHHLVVDLVSWRVILSDLEILLSSESKSLPSLAPAAVTMPAWTDALLSRAKDYNVESVLPFTVPSANFGFWDMDNGRENVMADTVVIQSRLDASSTAALLGRANIAFRTDPDDLMLAALVFSFLRVFPERSVPTIYAEGHGRNAWDDSIDLSRTVGWFTTMYPLVASATTRDLVETVRQVKDIRHSIRDKGFPYFASRYLTAQGRDAFKEHTNMEVLFNYLGQYQQLQQSDTVLRELQEPLEIQDAAPSTPRMALIDILAAVEGSEMVLSIGYNGRMGHRDRLQLWLNEYTAALRSLSTELPTMSPSFTPGDFPLLGIDDAGLKSLAATCKAKVGSLDPTMVESIYPCSPLQQGILVSQAQDAKSYIVYAAWKIRPARGTSFNVNQLKDAWRRLVRYHPVLRTVFCENGTSDGGHAQVLLRADTAAAEPTIKEIQCQRSDVAEFLRSSASSLPTDKPPHILSICTTDDDTYVSLQVSHALIDGTSMNLVMDDLVRSYNGNLQGSGPSYNDYISHICSEPIARSLSYWTETLADTQPCLFPVLSTEGTKRVLNKITLDVPSSTTDAMRQLGRAHAISVSNIFQLAWSLVLRAFTGSDSVCFGYLTSGRDVPVDRIEAMVGPLISMLVSSTQFGSSDDEAQSALDLLKSINRSYIDSLPHQHCSLGSIQNALGVSNTGLFNTVMSLQKINEEAETPEEFGFDLLDSHDPSEYNMTLNILDFNNIVELHFTYWTDKLSDSYASTVVDATLRAVEAIVKDPSRKMPVVDLVGDSERQGLVSRINQDHPTLQTTVHALIEAQVKAIPDNCAVTSWEGDLSYTELDHHATRLAVHLRSLGVGPEVTVPLCFKKSIWTVVAILAVMKAGGVFVPLDPAHPADRIKGIVEQLPSRIVALTSPQCVLTVAHLVDNTISVDASSIAQLENVSSAESLSPGATPSNAVYIIFTSGSTGQPKGVVLEHSAAASGTTAHGHDMSYSRDSRVLQFSSYSFDASILEILTTLVYGGCICVLSEEERINDLVGGINRLRVNWAFLTPAVAMMVEPSQVPTLRLLALGGAPLWLAVLQKWTAVGTIRVVNGYGPTECCALSTHNYYSRSYMRPEVIGKAMGCNTWVVDPRDPNILMPIGAVGELLIEGPIVARGYLNDLVKTQDAFLNGVSWLPSGRLYRTGDIVSYATEGNGDKISYIRRKDTQVKVRGQRIELGEISYQIGASHGSIVAHLVVLGSRGKFSGQIVAIFALDGFPTHQQGNDEPLQLLDSPQDLAKVRAIISEVSEFISDKLPSSMQPSAMVPVNRMPINTSGKIEARRVSAWVDGLDDATYARIMRIADEPDDEPDNEPEANVIQKSEAEDIIRAVVAEVVNVPLEQIPLRRSFFAIGGDSISAMAVVSRCRSRGITFTVSDIFKHKTITALAQFVSQSTQQITKKDGDGIDRSDKVNVDFSLSPIQQMFFDMYPDGVNHFNQSFLVQLPSTEALTSTVVHEAIRQLVDRHSMLRARFSDEDGDWVQRVTPSGDAKSLKYQVHNGVNVDQVVKLIDVAQTSLDIRTGPVMAASLLNLTDKRRILVLVAHHLVIDMVSWRVLLEELEVILSGNGHSLQNMPTSLPFQAWVRTQPRRVSKWSPSRVLPYDIPKPRMDYWLKRGEDNTCGDTRELGFTLDADATKALLGSCNEAFQTDPQDLFLAAAFQSFADAFPDRGPPAIFVEGHGRGDGASEGLDLSRTVGWFTSIVPVALPDGVVATNVVDTLMRIKDVRRSVPGQGVPYFSYRYLSAAGVRKFRNHDKMEILFNYFGQYQQLERDDALLRPVVGDEFPQYDADASVERLAIFDVAGAVTSGRASVTITMPGTLAKARVDGVSLWLDRLKHHLTSLVQVTSDMSTAFTLHDLPLIKNMSYDELSDMREVCLEHTGLWGPGAIEEIFPCSPIQQGILLSQAHRPDLYDVRVALEVSSRNGSLSAQSLGDAWRHVVQRQPMLRTVFLPNMRGNGSFDQAVLRDPVPSIRHVDLGDATDDEMALQTVKQSIAETKGDIFSYGKLPHEFTTYTIGNKTFVFIRLSHALVDGFSLPIVLNDLREAFAHRLSTTPGLSYRELVSFINEQPADQAIGHWVDFLKGSTPCRLPPLLDDASVPSSPELLAIEVEVPCSNALRALCAEHGVTMAIVFQLAWALVLRAYTGEDDVMFGYLTSGRDAPIEGVSTLVGPLINMLTCRAIFNDRSKTVLQLLSQLQDDFINGISNQHVSLAEIQHHLGIGSEGLFTSIISFQRHDAAAGAANDDDGLLKMTPIDGRDPTEYDLSVNVLDEADKDIQIHFTHWTSKASPSHAKHMMQALSAALVAISTKPNQPLVKVDLVGAETRREMDSWNATGIQFVSDECIHNIIERNSQAMPDRQAICGWDRTFTYGELDQAANAFAHHIHSLVDLKPDTFVATCFGKSAWTIVAQLAILKSGGAFVAIDPTHPADRVETILSELGSPPILLTESKHQDRFKTLFPNIVTVNEDTLSSLSVPNGPPSTRVRHSNTAYAIFTSGSTGRPKGIVIEHGSLSTAALTHAGPYQITSDTRALQFAAYTFDVSIGETFYPLSQGGCVCVPSDAARLEDLAGAINGLSADWAFLTPTVADLLDPSLVPGLKTLVLGGEAPTSVNIRRWHDKVFLISGYGPAETTIWCNATGRLNGSSDPANLGPPMGARVWVTDADDPSVLLPVGAVGELLIEGPLVSRGYTDPEKTAAAFISPPGWMTTAYPGKLIYRSGDIGRSRPDGTFSFVRRRDNQVKVRGQRVELNEVEVHISQAETSIRHAVVLYPKSGACQGRLTAVLSHHSLGGEELEQKQTVPGSGGIIAVQSDEAISASDLIQDRLLSTLPPYMIPKIWITVEHLPSTTNGKMDRRQILTWVESLTDDNLASIVQRKSNMTGSVESPTKPKTKMEEHFLQIWSNALNLPIDAIPHNQPFTSLGGDSITAMQVLARARERGITTTVHDILRSRSIADLAGRSRFKNIQLNGSEDSKALTVITDQPFALLPIQRLFFRTQTSVNHHFNQSFIVCLSRPFTADQVRMAIRAIVEHHPMLRARFLADGNEWKQKISPDIAGSFKFQQHHCSSLPDSVETLDDLQASLNISQGPLLVSCLLELSDGQALFLAAHHLVVDLVSWRVILADLEKLLAATSGTTSLPSLEQEGISMPAWTEALIQKSTEYDINSVLPFTVPAADFSFWDMDPTKETNIMADTASLQVRVDGVSTAALLGPANAAFGTDPDDLMIAALIFSFRSIFHERSSIPAVYTESHGRNAWDDGIDLSRTVGWLTTIYPVAVSDIDNAERDLLRVVRQVKDIRRSIPGKGLPYFAYRYLTEEGRAAFEHHDEMEILFNYLGQYQQLQKTDTIIQQIGETTLSTQDASDSTNRLALMDVVAAVEGSELVLSLGYNTKMQHKHRFQAWLDSFKYMLETLASQLPVIPATFTPSDLPLLSLGEDGLSTLAAACHAKVGSWGPDVVEASYPCSPLQQGILLSQAKDESAYVVSGIWKVSPAKGGSPVNLDQLQNAWRRLVQYHQILRTVFCESGRNDGIYAQVVLRENTTESQPTIEVRKCDGPDPLAFLHSSTPALPSDKPPHALLICDAGTDVYLSFNISHALMDGTSLGLMMDDLLRGYHGTLEGVGPSYEPYIAHVYNKPASESLSYWSDTLANARPCHFPVLVDAEGDDTVRSLNKIMRPVPGVEAMRQLGRTHGVSIANFFQVAWALVLRAFTGSDDICFGYLTSGRDVPVDRIEEIVGPLISMLVSSADFSMSDGAPSAIELLQTMNSAYVDSLPHQHCSLADIQRVLRIGNKGLFNTALSLQRVTTGDETQDQIEINVVEGDDPSEYNITVNVVDYGETIDLHFTYWSDKISDSHASDVVEALIRALDAIVQDPNRTLPAVDMLGDSGRKRIMEWNGDGQAPAALNSTVHALIEAHVKESPNRCAVTSSWEGELSYAELDNHATRLSVYLRSLGVGPEVTVPLIFTKSIWMVVSMLAVMKAGGVFVPLDPAHPPERIAMIVEQLPNRAVALASPDRTGLISGLVDNVVALDADEAACIAKDADGDNKLPSDEATPDNAVYIIFTSGSTGQPKGVVLDHRATATEIVTTLVYGGCVCVLSEDERINDLAAAINRLQATWMLLTPAVASTLDPSEVPCIRYIALGGESSSHATNKKWSKGCKVLHAYGPTECCVMCAYDDRTGLLTRPEVIGGSVGCNNWVVDPRDPSVLMPIGAVGELLVQGPIMARGYLNNPDKTQESFLDTGLPSVSGLSRAYKTGDLVSYCSEGKGNKLTFVRRKDTQVKVRGQRIELGEISHQISASNDKVATQMVTLGSRGTLNGKIVAVLTLRGLQTTEDGGDTEPLQILDNPKDIQIARDIVAEVQNYIADKLPGYMHPSVMIVVNRMPINSSGKLETRRVAQWVDEVTDEMYERIIKNLADNEPEAGSESAQTAVVQIISEAVAEVINLPGKVSLRRSFISMGGDSITAMQVMALCRRRGVSLPVQDILKSNNIIAMAAKAQQIGGSSVDSAKDEDEFAPFPLSPIQKLHLTQFRDGENHYNQSMLLKLRRPISETVLHEALLQLVRRHPMLRARFDNDSTRGQWTQRVTNDIQGSLSYAVTEFNTLEEAMGTMIEAERGLDITAGPLVAARVVRVHDSMSIFLVAHHLVIDLVSWRIVLQDLEQLIAGTSLPGTQMSWSYQRWAHSLMKYAETNASTALALPFTPTEPDLDFWGVKKTSNDFNNLVQGDFTLDPSLTSALLDSADKNLKAEVLDVLLAMAAHTFSSVFSDRAAPTFHTETHGRDHPQDTTASVHETIGWFTAIAPLVLDTPSDEYIDSVIRVKDMRRAIPGLGIPYFTAKTLQGSQTLPVEILFNYLGRFQQLERDDGLFESLPKSMGPVDVNLSAARLSVIDISAVVEKDALTVSWNYSAQIQHQDKLSKWFALYEQALHEVVSALQKTSLQLTKSDVPLLPISHQQLKPLNKALAAVSRNGVEAVEDVYPTSPMQRGILLSQSKDASQYDVHAVWEITPANRHDSVDVSRLQRAWYRVIQRHSMLRTVFIDSVVDNSPFDQVVLNKFRPSIKLLTYDDDEEDHDSMMEELWESANGSFAQNAPPHRLALCSDTQGKVYAHFQVSHALIDAGSLRTIIKDWSLAYASPNLTMTPDQSEIRHLHTDVDSGTRLKALAKELNISMASIFQLAWALVLRSYTNLQDICFGYVSSGRDVELDGIVDAVGPFINILVSRIVFGKGDTAAAMLKQLFSTYLDSLPHQHASLADITHALKMPGGKLFNTAFSFQKISQSNGGGKAQDLPLSFSTIGGADPTEFDVTITVIENDSSIEFSIQYSTSFLSEPQANNLSQSLIQALDAIEATPSEAIETLDLVPAKHMEQLKTWGDRLPPTVDRHVHDLFDDMVRSTPTAPAIHAWDGEFTYAELDRESSRLAGLLLKQGVKPDTFVALCFEKSAWVAVAYLAILKAGAAFMLLDPEAPIERIQYMMEQTKTSMVLCSPTYKDMVDDWDATAIVISKEVMGTLPDFAGPFPNISTSSAAYIIFTSGTTGKPKGAVIEHGAYSSSAIAQKKALYIGPGSRFLQFASFMFDATMIEMVTPLLSGGCVCIPRRQDIISDLPRVVREMNINMAILTSSFIRTMSPEEVPTIKRLIQGGEPLSQKDIDIWADKVILGNAYGPSECSVMASCLSDVLRTSEPSNIGYPAACAHWVTEPANMHRLVPIGAIGELLLQGPTLSRGYINNPDKTAEAFVTGLNWATQVGRDPDTRFYATGDLVRLNSDGSVTFVGRKDTQIKIHGQRMELGEIQHHLTTIDEIRHSVVLSPSEGPLQKRLVAVLELANLSSTAASSEEIKLIEPSLRSKATESIQRIRDIITQRLPSYMIPSTWIVVQSMPTMISGKLNLPAVQFWVQNINDETYQELHAAEAVSELDSSDYVAMQVSRKLSSLLVDAPGSTGKLEDFVGKDIVPMQCGLDSITAITFSTWLRKTFGVTISLATLLSLDTSIQTLAVTIKADMAKVGSSGPSNVESVTESTSTTKAAIDLHSEFQHYDQALSQLPVSEIPNTGVAKIPSNFLVTGSTGFLGSQIVRQLILRPNINKVFCLVRAEDDIQAQERMMEVARKGQWWQPELSERIEAWSGDLAKPHLGLDDTRWASVVGGSIDAIIHNGAMVHWHLGYRDLKDANVGSTFDLLSALSKAPSPPRFAYVTGGYFPDEERTDNEVLDLLQGGDGYSQTKFLSEALVRSHGQRLCRHSATFPMPVVIQPGLVIGDADHGVSNLDDFLWRVVASALRIGAYNVDEFNDPNAWLLVAGSDQIATSTIDACMTTVSASATTTIPPSIRFVDGVPVKELWNLLIDEFDFSLRPMSGPEWLQALENDMDSQGPSHPLFPVFEFLQLKQGAVGTLKPTNGDSICPQVETLYRLRQSVDYLNNIGFFASSDSVSPFASKAAFRRTGLRPAKTAHF</sequence>
<name>NRPS5_GIBZE</name>
<evidence type="ECO:0000255" key="1"/>
<evidence type="ECO:0000255" key="2">
    <source>
        <dbReference type="PROSITE-ProRule" id="PRU00258"/>
    </source>
</evidence>
<evidence type="ECO:0000256" key="3">
    <source>
        <dbReference type="SAM" id="MobiDB-lite"/>
    </source>
</evidence>
<evidence type="ECO:0000269" key="4">
    <source>
    </source>
</evidence>
<evidence type="ECO:0000269" key="5">
    <source>
    </source>
</evidence>
<evidence type="ECO:0000269" key="6">
    <source>
    </source>
</evidence>
<evidence type="ECO:0000269" key="7">
    <source>
    </source>
</evidence>
<evidence type="ECO:0000303" key="8">
    <source>
    </source>
</evidence>
<evidence type="ECO:0000303" key="9">
    <source>
    </source>
</evidence>
<evidence type="ECO:0000303" key="10">
    <source>
    </source>
</evidence>
<evidence type="ECO:0000305" key="11"/>
<evidence type="ECO:0000305" key="12">
    <source>
    </source>
</evidence>
<evidence type="ECO:0000305" key="13">
    <source>
    </source>
</evidence>
<accession>I1SAJ7</accession>
<accession>A0A098DZ30</accession>
<keyword id="KW-0413">Isomerase</keyword>
<keyword id="KW-0436">Ligase</keyword>
<keyword id="KW-0596">Phosphopantetheine</keyword>
<keyword id="KW-0597">Phosphoprotein</keyword>
<keyword id="KW-1185">Reference proteome</keyword>
<keyword id="KW-0677">Repeat</keyword>
<keyword id="KW-0843">Virulence</keyword>
<comment type="function">
    <text evidence="6 7 13">Nonribosomal peptide synthetase; part of the Fg3_54/C64 gene cluster that mediates the biosynthesis of the octapeptide fusaoctaxin A, a virulence factor that is required for cell-to-cell invasiveness of plant host (PubMed:30804501). The 2 nonribosomal peptide synthetases NRPS9 and NRPS5 form an assembly line which likely utilizes GABA as a starter unit (loaded on the unique module M1 of NRPS9) and sequentially incorporates seven extender units composed of the residues L-Ala, L-allo-Ile, L-Ser, L-Val, L-Ser, L-Leu and L-Leu, respectively (PubMed:30804501, PubMed:31100892). During the process, each of the residues that are tethered on modules M3-M7 of NRPS5 containing an E domain can undergo an epimerization reaction to produce a D-configuration before the transpeptidation reaction occurs (PubMed:30804501, PubMed:31100892). The elongation of the peptidyl chain might be terminated by module M8-mediated L-Leu incorporation, followed by R domain-catalyzed 4 electron reduction to release the resulting octapeptide from the assembly line as an alcohol (PubMed:30804501, PubMed:31100892). Fusaoctaxin A is cleaved by the cluster specific ABC transporter FGM5 to the pentapeptide fusapentaxin A and the tripeptide fusatrixin A (PubMed:31100892). The other enzymes from the cluster, FGM1, FGM2, FGM3 and FGM9 seem not to be involved in the biosynthesis of fusaoctaxin A and their functions have still to be determined (Probable).</text>
</comment>
<comment type="pathway">
    <text evidence="6 7">Secondary metabolite biosynthesis.</text>
</comment>
<comment type="induction">
    <text evidence="4 5 7">Expression is positively regulated by the cluster-specific transcription factor FGM4 and is induced during infection of coleoptiles of wheat seedlings (PubMed:23266949, PubMed:25333987). The fusaoctaxin A gene cluster is silenced by H3K27 trimethylation by the histone methyltransferase KMT6 (PubMed:31100892).</text>
</comment>
<comment type="domain">
    <text evidence="12 13">NRP synthetases are composed of discrete domains (adenylation (A), thiolation (T) or peptidyl carrier protein (PCP) and condensation (C) domains) which when grouped together are referred to as a single module. Each module is responsible for the recognition (via the A domain) and incorporation of a single amino acid into the growing peptide product. Thus, an NRP synthetase is generally composed of one or more modules and can terminate in a thioesterase domain (TE) that releases the newly synthesized peptide from the enzyme. Occasionally, epimerase (E) domains (responsible for L- to D-amino acid conversion) are present within the NRP synthetase. NRPS5 has the following 7 module architecture: A-C-A-T-C-A-T-E-C-A-T-E-C-A-T-E-C-A-T-E-C-A-T-E-C-A-T-TE.</text>
</comment>
<comment type="disruption phenotype">
    <text evidence="6">Produces significantly smaller lesions on susceptible wheat cultivars.</text>
</comment>
<comment type="similarity">
    <text evidence="11">Belongs to the NRP synthetase family.</text>
</comment>
<gene>
    <name evidence="10" type="primary">NRPS5</name>
    <name evidence="8" type="synonym">NPS5</name>
    <name type="ORF">FGRAMPH1_01T20955</name>
</gene>
<proteinExistence type="evidence at protein level"/>
<reference key="1">
    <citation type="journal article" date="2007" name="Science">
        <title>The Fusarium graminearum genome reveals a link between localized polymorphism and pathogen specialization.</title>
        <authorList>
            <person name="Cuomo C.A."/>
            <person name="Gueldener U."/>
            <person name="Xu J.-R."/>
            <person name="Trail F."/>
            <person name="Turgeon B.G."/>
            <person name="Di Pietro A."/>
            <person name="Walton J.D."/>
            <person name="Ma L.-J."/>
            <person name="Baker S.E."/>
            <person name="Rep M."/>
            <person name="Adam G."/>
            <person name="Antoniw J."/>
            <person name="Baldwin T."/>
            <person name="Calvo S.E."/>
            <person name="Chang Y.-L."/>
            <person name="DeCaprio D."/>
            <person name="Gale L.R."/>
            <person name="Gnerre S."/>
            <person name="Goswami R.S."/>
            <person name="Hammond-Kosack K."/>
            <person name="Harris L.J."/>
            <person name="Hilburn K."/>
            <person name="Kennell J.C."/>
            <person name="Kroken S."/>
            <person name="Magnuson J.K."/>
            <person name="Mannhaupt G."/>
            <person name="Mauceli E.W."/>
            <person name="Mewes H.-W."/>
            <person name="Mitterbauer R."/>
            <person name="Muehlbauer G."/>
            <person name="Muensterkoetter M."/>
            <person name="Nelson D."/>
            <person name="O'Donnell K."/>
            <person name="Ouellet T."/>
            <person name="Qi W."/>
            <person name="Quesneville H."/>
            <person name="Roncero M.I.G."/>
            <person name="Seong K.-Y."/>
            <person name="Tetko I.V."/>
            <person name="Urban M."/>
            <person name="Waalwijk C."/>
            <person name="Ward T.J."/>
            <person name="Yao J."/>
            <person name="Birren B.W."/>
            <person name="Kistler H.C."/>
        </authorList>
    </citation>
    <scope>NUCLEOTIDE SEQUENCE [LARGE SCALE GENOMIC DNA]</scope>
    <source>
        <strain>ATCC MYA-4620 / CBS 123657 / FGSC 9075 / NRRL 31084 / PH-1</strain>
    </source>
</reference>
<reference key="2">
    <citation type="journal article" date="2010" name="Nature">
        <title>Comparative genomics reveals mobile pathogenicity chromosomes in Fusarium.</title>
        <authorList>
            <person name="Ma L.-J."/>
            <person name="van der Does H.C."/>
            <person name="Borkovich K.A."/>
            <person name="Coleman J.J."/>
            <person name="Daboussi M.-J."/>
            <person name="Di Pietro A."/>
            <person name="Dufresne M."/>
            <person name="Freitag M."/>
            <person name="Grabherr M."/>
            <person name="Henrissat B."/>
            <person name="Houterman P.M."/>
            <person name="Kang S."/>
            <person name="Shim W.-B."/>
            <person name="Woloshuk C."/>
            <person name="Xie X."/>
            <person name="Xu J.-R."/>
            <person name="Antoniw J."/>
            <person name="Baker S.E."/>
            <person name="Bluhm B.H."/>
            <person name="Breakspear A."/>
            <person name="Brown D.W."/>
            <person name="Butchko R.A.E."/>
            <person name="Chapman S."/>
            <person name="Coulson R."/>
            <person name="Coutinho P.M."/>
            <person name="Danchin E.G.J."/>
            <person name="Diener A."/>
            <person name="Gale L.R."/>
            <person name="Gardiner D.M."/>
            <person name="Goff S."/>
            <person name="Hammond-Kosack K.E."/>
            <person name="Hilburn K."/>
            <person name="Hua-Van A."/>
            <person name="Jonkers W."/>
            <person name="Kazan K."/>
            <person name="Kodira C.D."/>
            <person name="Koehrsen M."/>
            <person name="Kumar L."/>
            <person name="Lee Y.-H."/>
            <person name="Li L."/>
            <person name="Manners J.M."/>
            <person name="Miranda-Saavedra D."/>
            <person name="Mukherjee M."/>
            <person name="Park G."/>
            <person name="Park J."/>
            <person name="Park S.-Y."/>
            <person name="Proctor R.H."/>
            <person name="Regev A."/>
            <person name="Ruiz-Roldan M.C."/>
            <person name="Sain D."/>
            <person name="Sakthikumar S."/>
            <person name="Sykes S."/>
            <person name="Schwartz D.C."/>
            <person name="Turgeon B.G."/>
            <person name="Wapinski I."/>
            <person name="Yoder O."/>
            <person name="Young S."/>
            <person name="Zeng Q."/>
            <person name="Zhou S."/>
            <person name="Galagan J."/>
            <person name="Cuomo C.A."/>
            <person name="Kistler H.C."/>
            <person name="Rep M."/>
        </authorList>
    </citation>
    <scope>GENOME REANNOTATION</scope>
    <source>
        <strain>ATCC MYA-4620 / CBS 123657 / FGSC 9075 / NRRL 31084 / PH-1</strain>
    </source>
</reference>
<reference key="3">
    <citation type="journal article" date="2015" name="BMC Genomics">
        <title>The completed genome sequence of the pathogenic ascomycete fungus Fusarium graminearum.</title>
        <authorList>
            <person name="King R."/>
            <person name="Urban M."/>
            <person name="Hammond-Kosack M.C.U."/>
            <person name="Hassani-Pak K."/>
            <person name="Hammond-Kosack K.E."/>
        </authorList>
    </citation>
    <scope>NUCLEOTIDE SEQUENCE [LARGE SCALE GENOMIC DNA]</scope>
    <source>
        <strain>ATCC MYA-4620 / CBS 123657 / FGSC 9075 / NRRL 31084 / PH-1</strain>
    </source>
</reference>
<reference key="4">
    <citation type="submission" date="2017-01" db="UniProtKB">
        <authorList>
            <consortium name="EnsemblFungi"/>
        </authorList>
    </citation>
    <scope>IDENTIFICATION</scope>
    <source>
        <strain>ATCC MYA-4620 / CBS 123657 / FGSC 9075 / NRRL 31084 / PH-1</strain>
    </source>
</reference>
<reference key="5">
    <citation type="journal article" date="2007" name="Curr. Genet.">
        <title>Nonribosomal peptide synthetase (NPS) genes in Fusarium graminearum, F. culmorum and F. pseudograminearium and identification of NPS2 as the producer of ferricrocin.</title>
        <authorList>
            <person name="Tobiasen C."/>
            <person name="Aahman J."/>
            <person name="Ravnholt K.S."/>
            <person name="Bjerrum M.J."/>
            <person name="Grell M.N."/>
            <person name="Giese H."/>
        </authorList>
    </citation>
    <scope>IDENTIFICATION</scope>
    <scope>DOMAIN</scope>
</reference>
<reference key="6">
    <citation type="journal article" date="2012" name="Plant Cell">
        <title>In planta stage-specific fungal gene profiling elucidates the molecular strategies of Fusarium graminearum growing inside wheat coleoptiles.</title>
        <authorList>
            <person name="Zhang X.W."/>
            <person name="Jia L.J."/>
            <person name="Zhang Y."/>
            <person name="Jiang G."/>
            <person name="Li X."/>
            <person name="Zhang D."/>
            <person name="Tang W.H."/>
        </authorList>
    </citation>
    <scope>INDUCTION</scope>
</reference>
<reference key="7">
    <citation type="journal article" date="2014" name="PLoS ONE">
        <title>The Fusarium graminearum genome reveals more secondary metabolite gene clusters and hints of horizontal gene transfer.</title>
        <authorList>
            <person name="Sieber C.M."/>
            <person name="Lee W."/>
            <person name="Wong P."/>
            <person name="Muensterkoetter M."/>
            <person name="Mewes H.W."/>
            <person name="Schmeitzl C."/>
            <person name="Varga E."/>
            <person name="Berthiller F."/>
            <person name="Adam G."/>
            <person name="Gueldener U."/>
        </authorList>
    </citation>
    <scope>IDENTIFICATION</scope>
    <scope>INDUCTION</scope>
</reference>
<reference key="8">
    <citation type="journal article" date="2019" name="Nat. Commun.">
        <title>A linear nonribosomal octapeptide from Fusarium graminearum facilitates cell-to-cell invasion of wheat.</title>
        <authorList>
            <person name="Jia L.J."/>
            <person name="Tang H.Y."/>
            <person name="Wang W.Q."/>
            <person name="Yuan T.L."/>
            <person name="Wei W.Q."/>
            <person name="Pang B."/>
            <person name="Gong X.M."/>
            <person name="Wang S.F."/>
            <person name="Li Y.J."/>
            <person name="Zhang D."/>
            <person name="Liu W."/>
            <person name="Tang W.H."/>
        </authorList>
    </citation>
    <scope>FUNCTION</scope>
    <scope>CATALYTIC ACTIVITY</scope>
    <scope>DISRUPTION PHENOTYPE</scope>
    <scope>PATHWAY</scope>
</reference>
<reference key="9">
    <citation type="journal article" date="2019" name="Toxins">
        <title>Fusaoctaxin A, an example of a two-step mechanism for non-ribosomal peptide assembly and maturation in fungi.</title>
        <authorList>
            <person name="Westphal K.R."/>
            <person name="Nielsen K.A.H."/>
            <person name="Wollenberg R.D."/>
            <person name="Moellehoej M.B."/>
            <person name="Bachleitner S."/>
            <person name="Studt L."/>
            <person name="Lysoee E."/>
            <person name="Giese H."/>
            <person name="Wimmer R."/>
            <person name="Soerensen J.L."/>
            <person name="Sondergaard T.E."/>
        </authorList>
    </citation>
    <scope>FUNCTION</scope>
    <scope>CATALYTIC ACTIVITY</scope>
    <scope>PATHWAY</scope>
</reference>
<organism>
    <name type="scientific">Gibberella zeae (strain ATCC MYA-4620 / CBS 123657 / FGSC 9075 / NRRL 31084 / PH-1)</name>
    <name type="common">Wheat head blight fungus</name>
    <name type="synonym">Fusarium graminearum</name>
    <dbReference type="NCBI Taxonomy" id="229533"/>
    <lineage>
        <taxon>Eukaryota</taxon>
        <taxon>Fungi</taxon>
        <taxon>Dikarya</taxon>
        <taxon>Ascomycota</taxon>
        <taxon>Pezizomycotina</taxon>
        <taxon>Sordariomycetes</taxon>
        <taxon>Hypocreomycetidae</taxon>
        <taxon>Hypocreales</taxon>
        <taxon>Nectriaceae</taxon>
        <taxon>Fusarium</taxon>
    </lineage>
</organism>
<dbReference type="EC" id="6.3.2.-" evidence="13"/>
<dbReference type="EMBL" id="HG970334">
    <property type="protein sequence ID" value="CEF87111.1"/>
    <property type="molecule type" value="Genomic_DNA"/>
</dbReference>
<dbReference type="RefSeq" id="XP_011325382.1">
    <property type="nucleotide sequence ID" value="XM_011327080.1"/>
</dbReference>
<dbReference type="STRING" id="229533.I1SAJ7"/>
<dbReference type="KEGG" id="fgr:FGSG_13878"/>
<dbReference type="VEuPathDB" id="FungiDB:FGRAMPH1_01G20955"/>
<dbReference type="eggNOG" id="KOG1178">
    <property type="taxonomic scope" value="Eukaryota"/>
</dbReference>
<dbReference type="HOGENOM" id="CLU_000022_60_6_1"/>
<dbReference type="InParanoid" id="I1SAJ7"/>
<dbReference type="OrthoDB" id="60510at110618"/>
<dbReference type="PHI-base" id="PHI:9042"/>
<dbReference type="Proteomes" id="UP000070720">
    <property type="component" value="Chromosome 3"/>
</dbReference>
<dbReference type="GO" id="GO:0016853">
    <property type="term" value="F:isomerase activity"/>
    <property type="evidence" value="ECO:0007669"/>
    <property type="project" value="UniProtKB-KW"/>
</dbReference>
<dbReference type="GO" id="GO:0016874">
    <property type="term" value="F:ligase activity"/>
    <property type="evidence" value="ECO:0007669"/>
    <property type="project" value="UniProtKB-KW"/>
</dbReference>
<dbReference type="GO" id="GO:0031177">
    <property type="term" value="F:phosphopantetheine binding"/>
    <property type="evidence" value="ECO:0007669"/>
    <property type="project" value="InterPro"/>
</dbReference>
<dbReference type="GO" id="GO:0009058">
    <property type="term" value="P:biosynthetic process"/>
    <property type="evidence" value="ECO:0007669"/>
    <property type="project" value="UniProtKB-ARBA"/>
</dbReference>
<dbReference type="CDD" id="cd05918">
    <property type="entry name" value="A_NRPS_SidN3_like"/>
    <property type="match status" value="7"/>
</dbReference>
<dbReference type="CDD" id="cd19542">
    <property type="entry name" value="CT_NRPS-like"/>
    <property type="match status" value="6"/>
</dbReference>
<dbReference type="CDD" id="cd19534">
    <property type="entry name" value="E_NRPS"/>
    <property type="match status" value="4"/>
</dbReference>
<dbReference type="FunFam" id="3.40.50.980:FF:000001">
    <property type="entry name" value="Non-ribosomal peptide synthetase"/>
    <property type="match status" value="4"/>
</dbReference>
<dbReference type="FunFam" id="3.30.559.10:FF:000016">
    <property type="entry name" value="Nonribosomal peptide synthase Pes1"/>
    <property type="match status" value="5"/>
</dbReference>
<dbReference type="FunFam" id="3.30.559.30:FF:000002">
    <property type="entry name" value="Nonribosomal peptide synthase Pes1"/>
    <property type="match status" value="5"/>
</dbReference>
<dbReference type="FunFam" id="3.30.559.30:FF:000005">
    <property type="entry name" value="Nonribosomal peptide synthase Pes1"/>
    <property type="match status" value="2"/>
</dbReference>
<dbReference type="FunFam" id="3.30.300.30:FF:000015">
    <property type="entry name" value="Nonribosomal peptide synthase SidD"/>
    <property type="match status" value="7"/>
</dbReference>
<dbReference type="FunFam" id="1.10.1200.10:FF:000005">
    <property type="entry name" value="Nonribosomal peptide synthetase 1"/>
    <property type="match status" value="1"/>
</dbReference>
<dbReference type="FunFam" id="3.40.50.12780:FF:000014">
    <property type="entry name" value="Nonribosomal peptide synthetase 1"/>
    <property type="match status" value="5"/>
</dbReference>
<dbReference type="Gene3D" id="3.30.300.30">
    <property type="match status" value="7"/>
</dbReference>
<dbReference type="Gene3D" id="1.10.1200.10">
    <property type="entry name" value="ACP-like"/>
    <property type="match status" value="6"/>
</dbReference>
<dbReference type="Gene3D" id="3.30.559.10">
    <property type="entry name" value="Chloramphenicol acetyltransferase-like domain"/>
    <property type="match status" value="13"/>
</dbReference>
<dbReference type="Gene3D" id="3.40.50.12780">
    <property type="entry name" value="N-terminal domain of ligase-like"/>
    <property type="match status" value="9"/>
</dbReference>
<dbReference type="Gene3D" id="3.40.50.720">
    <property type="entry name" value="NAD(P)-binding Rossmann-like Domain"/>
    <property type="match status" value="1"/>
</dbReference>
<dbReference type="Gene3D" id="3.30.559.30">
    <property type="entry name" value="Nonribosomal peptide synthetase, condensation domain"/>
    <property type="match status" value="12"/>
</dbReference>
<dbReference type="InterPro" id="IPR010071">
    <property type="entry name" value="AA_adenyl_dom"/>
</dbReference>
<dbReference type="InterPro" id="IPR036736">
    <property type="entry name" value="ACP-like_sf"/>
</dbReference>
<dbReference type="InterPro" id="IPR045851">
    <property type="entry name" value="AMP-bd_C_sf"/>
</dbReference>
<dbReference type="InterPro" id="IPR020845">
    <property type="entry name" value="AMP-binding_CS"/>
</dbReference>
<dbReference type="InterPro" id="IPR000873">
    <property type="entry name" value="AMP-dep_synth/lig_dom"/>
</dbReference>
<dbReference type="InterPro" id="IPR042099">
    <property type="entry name" value="ANL_N_sf"/>
</dbReference>
<dbReference type="InterPro" id="IPR023213">
    <property type="entry name" value="CAT-like_dom_sf"/>
</dbReference>
<dbReference type="InterPro" id="IPR001242">
    <property type="entry name" value="Condensatn"/>
</dbReference>
<dbReference type="InterPro" id="IPR013120">
    <property type="entry name" value="Far_NAD-bd"/>
</dbReference>
<dbReference type="InterPro" id="IPR036291">
    <property type="entry name" value="NAD(P)-bd_dom_sf"/>
</dbReference>
<dbReference type="InterPro" id="IPR020806">
    <property type="entry name" value="PKS_PP-bd"/>
</dbReference>
<dbReference type="InterPro" id="IPR009081">
    <property type="entry name" value="PP-bd_ACP"/>
</dbReference>
<dbReference type="InterPro" id="IPR006162">
    <property type="entry name" value="Ppantetheine_attach_site"/>
</dbReference>
<dbReference type="NCBIfam" id="TIGR01733">
    <property type="entry name" value="AA-adenyl-dom"/>
    <property type="match status" value="6"/>
</dbReference>
<dbReference type="NCBIfam" id="NF003417">
    <property type="entry name" value="PRK04813.1"/>
    <property type="match status" value="9"/>
</dbReference>
<dbReference type="PANTHER" id="PTHR45398">
    <property type="match status" value="1"/>
</dbReference>
<dbReference type="PANTHER" id="PTHR45398:SF1">
    <property type="entry name" value="ENZYME, PUTATIVE (JCVI)-RELATED"/>
    <property type="match status" value="1"/>
</dbReference>
<dbReference type="Pfam" id="PF00501">
    <property type="entry name" value="AMP-binding"/>
    <property type="match status" value="8"/>
</dbReference>
<dbReference type="Pfam" id="PF00668">
    <property type="entry name" value="Condensation"/>
    <property type="match status" value="13"/>
</dbReference>
<dbReference type="Pfam" id="PF07993">
    <property type="entry name" value="NAD_binding_4"/>
    <property type="match status" value="1"/>
</dbReference>
<dbReference type="Pfam" id="PF00550">
    <property type="entry name" value="PP-binding"/>
    <property type="match status" value="7"/>
</dbReference>
<dbReference type="SMART" id="SM00823">
    <property type="entry name" value="PKS_PP"/>
    <property type="match status" value="7"/>
</dbReference>
<dbReference type="SMART" id="SM01294">
    <property type="entry name" value="PKS_PP_betabranch"/>
    <property type="match status" value="1"/>
</dbReference>
<dbReference type="SUPFAM" id="SSF56801">
    <property type="entry name" value="Acetyl-CoA synthetase-like"/>
    <property type="match status" value="8"/>
</dbReference>
<dbReference type="SUPFAM" id="SSF47336">
    <property type="entry name" value="ACP-like"/>
    <property type="match status" value="6"/>
</dbReference>
<dbReference type="SUPFAM" id="SSF52777">
    <property type="entry name" value="CoA-dependent acyltransferases"/>
    <property type="match status" value="25"/>
</dbReference>
<dbReference type="SUPFAM" id="SSF51735">
    <property type="entry name" value="NAD(P)-binding Rossmann-fold domains"/>
    <property type="match status" value="1"/>
</dbReference>
<dbReference type="PROSITE" id="PS00455">
    <property type="entry name" value="AMP_BINDING"/>
    <property type="match status" value="5"/>
</dbReference>
<dbReference type="PROSITE" id="PS50075">
    <property type="entry name" value="CARRIER"/>
    <property type="match status" value="7"/>
</dbReference>
<dbReference type="PROSITE" id="PS00012">
    <property type="entry name" value="PHOSPHOPANTETHEINE"/>
    <property type="match status" value="2"/>
</dbReference>
<feature type="chain" id="PRO_0000449944" description="Nonribosomal peptide synthetase 5">
    <location>
        <begin position="1"/>
        <end position="11197"/>
    </location>
</feature>
<feature type="domain" description="Carrier 1" evidence="2 13">
    <location>
        <begin position="1446"/>
        <end position="1522"/>
    </location>
</feature>
<feature type="domain" description="Carrier 2" evidence="2 13">
    <location>
        <begin position="2945"/>
        <end position="3021"/>
    </location>
</feature>
<feature type="domain" description="Carrier 3" evidence="2 13">
    <location>
        <begin position="4508"/>
        <end position="4584"/>
    </location>
</feature>
<feature type="domain" description="Carrier 4" evidence="2 13">
    <location>
        <begin position="6068"/>
        <end position="6141"/>
    </location>
</feature>
<feature type="domain" description="Carrier 5" evidence="2 13">
    <location>
        <begin position="7636"/>
        <end position="7712"/>
    </location>
</feature>
<feature type="domain" description="Carrier 6" evidence="2 13">
    <location>
        <begin position="9173"/>
        <end position="9248"/>
    </location>
</feature>
<feature type="domain" description="Carrier 7" evidence="2 13">
    <location>
        <begin position="10663"/>
        <end position="10749"/>
    </location>
</feature>
<feature type="region of interest" description="Adenylation (A) domain 1" evidence="1 13">
    <location>
        <begin position="19"/>
        <end position="413"/>
    </location>
</feature>
<feature type="region of interest" description="Disordered" evidence="3">
    <location>
        <begin position="426"/>
        <end position="452"/>
    </location>
</feature>
<feature type="region of interest" description="Condensation (C) domain 1" evidence="1 13">
    <location>
        <begin position="690"/>
        <end position="897"/>
    </location>
</feature>
<feature type="region of interest" description="Adenylation (A) domain 2" evidence="1 13">
    <location>
        <begin position="918"/>
        <end position="1310"/>
    </location>
</feature>
<feature type="region of interest" description="Condensation (C) domain 2" evidence="1 13">
    <location>
        <begin position="1952"/>
        <end position="2380"/>
    </location>
</feature>
<feature type="region of interest" description="Adenylation (A) domain 3" evidence="1 13">
    <location>
        <begin position="2406"/>
        <end position="2805"/>
    </location>
</feature>
<feature type="region of interest" description="Epimerase (E) domain 1" evidence="1 13">
    <location>
        <begin position="3041"/>
        <end position="3481"/>
    </location>
</feature>
<feature type="region of interest" description="Condensation (C) domain 3" evidence="1 13">
    <location>
        <begin position="3515"/>
        <end position="3957"/>
    </location>
</feature>
<feature type="region of interest" description="Adenylation (A) domain 4" evidence="1 13">
    <location>
        <begin position="3976"/>
        <end position="4371"/>
    </location>
</feature>
<feature type="region of interest" description="Epimerase (E) domain 2" evidence="1 13">
    <location>
        <begin position="4603"/>
        <end position="5022"/>
    </location>
</feature>
<feature type="region of interest" description="Condensation (C) domain 4" evidence="1 13">
    <location>
        <begin position="5069"/>
        <end position="5501"/>
    </location>
</feature>
<feature type="region of interest" description="Adenylation (A) domain 5" evidence="1 13">
    <location>
        <begin position="5521"/>
        <end position="5918"/>
    </location>
</feature>
<feature type="region of interest" description="Epimerase (E) domain 3" evidence="1 13">
    <location>
        <begin position="6162"/>
        <end position="6512"/>
    </location>
</feature>
<feature type="region of interest" description="Condensation (C) domain 5" evidence="1 13">
    <location>
        <begin position="6636"/>
        <end position="7076"/>
    </location>
</feature>
<feature type="region of interest" description="Adenylation (A) domain 6" evidence="1 13">
    <location>
        <begin position="7097"/>
        <end position="7491"/>
    </location>
</feature>
<feature type="region of interest" description="Epimerase (E) domain 4" evidence="1 13">
    <location>
        <begin position="7733"/>
        <end position="8162"/>
    </location>
</feature>
<feature type="region of interest" description="Condensation (C) domain 6" evidence="1 13">
    <location>
        <begin position="8205"/>
        <end position="8638"/>
    </location>
</feature>
<feature type="region of interest" description="Adenylation (A) domain 7" evidence="1 13">
    <location>
        <begin position="8660"/>
        <end position="8832"/>
    </location>
</feature>
<feature type="region of interest" description="Epimerase (E) domain 5" evidence="1 13">
    <location>
        <begin position="9565"/>
        <end position="9683"/>
    </location>
</feature>
<feature type="region of interest" description="Condensation (C) domain 7" evidence="1 13">
    <location>
        <begin position="9721"/>
        <end position="10116"/>
    </location>
</feature>
<feature type="region of interest" description="Adenylation (A) domain 8" evidence="1 13">
    <location>
        <begin position="10136"/>
        <end position="10529"/>
    </location>
</feature>
<feature type="region of interest" description="Thioesterase (TE) domain" evidence="1 13">
    <location>
        <begin position="10806"/>
        <end position="11104"/>
    </location>
</feature>
<feature type="modified residue" description="O-(pantetheine 4'-phosphoryl)serine" evidence="2">
    <location>
        <position position="1483"/>
    </location>
</feature>
<feature type="modified residue" description="O-(pantetheine 4'-phosphoryl)serine" evidence="2">
    <location>
        <position position="2982"/>
    </location>
</feature>
<feature type="modified residue" description="O-(pantetheine 4'-phosphoryl)serine" evidence="2">
    <location>
        <position position="4545"/>
    </location>
</feature>
<feature type="modified residue" description="O-(pantetheine 4'-phosphoryl)serine" evidence="2">
    <location>
        <position position="6102"/>
    </location>
</feature>
<feature type="modified residue" description="O-(pantetheine 4'-phosphoryl)serine" evidence="2">
    <location>
        <position position="7673"/>
    </location>
</feature>
<feature type="modified residue" description="O-(pantetheine 4'-phosphoryl)serine" evidence="2">
    <location>
        <position position="9209"/>
    </location>
</feature>
<feature type="modified residue" description="O-(pantetheine 4'-phosphoryl)serine" evidence="2">
    <location>
        <position position="10708"/>
    </location>
</feature>
<protein>
    <recommendedName>
        <fullName evidence="8">Nonribosomal peptide synthetase 5</fullName>
        <shortName evidence="10">NRPS 5</shortName>
        <ecNumber evidence="13">6.3.2.-</ecNumber>
    </recommendedName>
    <alternativeName>
        <fullName evidence="9">C64 cluster protein NRPS5</fullName>
    </alternativeName>
    <alternativeName>
        <fullName evidence="10">Fg3_54 cluster protein NRPS5</fullName>
    </alternativeName>
    <alternativeName>
        <fullName evidence="10">Fusaoctaxin A biosynthesis cluster protein NRPS5</fullName>
    </alternativeName>
</protein>